<sequence length="183" mass="21688">MTVQQPKRRPLSRYLKDFKHSQTHCAHCHKLLDRITLVRRGKIVNKIAISQLDMLLDDAAWQREQKEWVALCRFCGDLHCKKQSDFFDIIGFKQYLFEQTEMSHGTVREYVVRLRRLGNYLSEQNISHDLLQDGFLDESLAPWLPETSTNNYRIALRKYQQYKAHQQIAPRQKSPFTASSDIY</sequence>
<dbReference type="EMBL" id="AB010947">
    <property type="protein sequence ID" value="BAA36398.1"/>
    <property type="molecule type" value="Genomic_DNA"/>
</dbReference>
<dbReference type="EMBL" id="AE006468">
    <property type="protein sequence ID" value="AAL20867.1"/>
    <property type="molecule type" value="Genomic_DNA"/>
</dbReference>
<dbReference type="EMBL" id="D00497">
    <property type="status" value="NOT_ANNOTATED_CDS"/>
    <property type="molecule type" value="Genomic_DNA"/>
</dbReference>
<dbReference type="RefSeq" id="NP_460908.1">
    <property type="nucleotide sequence ID" value="NC_003197.2"/>
</dbReference>
<dbReference type="RefSeq" id="WP_000218080.1">
    <property type="nucleotide sequence ID" value="NC_003197.2"/>
</dbReference>
<dbReference type="STRING" id="99287.STM1955"/>
<dbReference type="PaxDb" id="99287-STM1955"/>
<dbReference type="GeneID" id="1253476"/>
<dbReference type="KEGG" id="stm:STM1955"/>
<dbReference type="PATRIC" id="fig|99287.12.peg.2070"/>
<dbReference type="HOGENOM" id="CLU_132109_0_0_6"/>
<dbReference type="OMA" id="GDLHCKE"/>
<dbReference type="PhylomeDB" id="P0A210"/>
<dbReference type="BioCyc" id="SENT99287:STM1955-MONOMER"/>
<dbReference type="PHI-base" id="PHI:9178"/>
<dbReference type="Proteomes" id="UP000001014">
    <property type="component" value="Chromosome"/>
</dbReference>
<dbReference type="GO" id="GO:0003677">
    <property type="term" value="F:DNA binding"/>
    <property type="evidence" value="ECO:0007669"/>
    <property type="project" value="InterPro"/>
</dbReference>
<dbReference type="GO" id="GO:0015074">
    <property type="term" value="P:DNA integration"/>
    <property type="evidence" value="ECO:0007669"/>
    <property type="project" value="InterPro"/>
</dbReference>
<dbReference type="InterPro" id="IPR022523">
    <property type="entry name" value="Flagellar_regulator_FliZ"/>
</dbReference>
<dbReference type="InterPro" id="IPR004107">
    <property type="entry name" value="Integrase_SAM-like_N"/>
</dbReference>
<dbReference type="NCBIfam" id="TIGR03823">
    <property type="entry name" value="FliZ"/>
    <property type="match status" value="1"/>
</dbReference>
<dbReference type="Pfam" id="PF02899">
    <property type="entry name" value="Phage_int_SAM_1"/>
    <property type="match status" value="1"/>
</dbReference>
<proteinExistence type="predicted"/>
<name>FLIZ_SALTY</name>
<accession>P0A210</accession>
<accession>P52628</accession>
<accession>Q9S1C1</accession>
<protein>
    <recommendedName>
        <fullName>Protein FliZ</fullName>
    </recommendedName>
</protein>
<gene>
    <name type="primary">fliZ</name>
    <name type="ordered locus">STM1955</name>
</gene>
<organism>
    <name type="scientific">Salmonella typhimurium (strain LT2 / SGSC1412 / ATCC 700720)</name>
    <dbReference type="NCBI Taxonomy" id="99287"/>
    <lineage>
        <taxon>Bacteria</taxon>
        <taxon>Pseudomonadati</taxon>
        <taxon>Pseudomonadota</taxon>
        <taxon>Gammaproteobacteria</taxon>
        <taxon>Enterobacterales</taxon>
        <taxon>Enterobacteriaceae</taxon>
        <taxon>Salmonella</taxon>
    </lineage>
</organism>
<keyword id="KW-1185">Reference proteome</keyword>
<reference key="1">
    <citation type="journal article" date="1999" name="Microbiology">
        <title>Structure and expression of the fliA operon of Salmonella typhimurium.</title>
        <authorList>
            <person name="Ikebe T."/>
            <person name="Iyoda S."/>
            <person name="Kutsukake K."/>
        </authorList>
    </citation>
    <scope>NUCLEOTIDE SEQUENCE [GENOMIC DNA]</scope>
    <source>
        <strain>KK1004</strain>
    </source>
</reference>
<reference key="2">
    <citation type="journal article" date="2001" name="Nature">
        <title>Complete genome sequence of Salmonella enterica serovar Typhimurium LT2.</title>
        <authorList>
            <person name="McClelland M."/>
            <person name="Sanderson K.E."/>
            <person name="Spieth J."/>
            <person name="Clifton S.W."/>
            <person name="Latreille P."/>
            <person name="Courtney L."/>
            <person name="Porwollik S."/>
            <person name="Ali J."/>
            <person name="Dante M."/>
            <person name="Du F."/>
            <person name="Hou S."/>
            <person name="Layman D."/>
            <person name="Leonard S."/>
            <person name="Nguyen C."/>
            <person name="Scott K."/>
            <person name="Holmes A."/>
            <person name="Grewal N."/>
            <person name="Mulvaney E."/>
            <person name="Ryan E."/>
            <person name="Sun H."/>
            <person name="Florea L."/>
            <person name="Miller W."/>
            <person name="Stoneking T."/>
            <person name="Nhan M."/>
            <person name="Waterston R."/>
            <person name="Wilson R.K."/>
        </authorList>
    </citation>
    <scope>NUCLEOTIDE SEQUENCE [LARGE SCALE GENOMIC DNA]</scope>
    <source>
        <strain>LT2 / SGSC1412 / ATCC 700720</strain>
    </source>
</reference>
<reference key="3">
    <citation type="journal article" date="1990" name="Mol. Gen. Genet.">
        <title>Gene fliA encodes an alternative sigma factor specific for flagellar operons in Salmonella typhimurium.</title>
        <authorList>
            <person name="Ohnishi K."/>
            <person name="Kutsukake K."/>
            <person name="Suzuki H."/>
            <person name="Iino T."/>
        </authorList>
    </citation>
    <scope>NUCLEOTIDE SEQUENCE [GENOMIC DNA] OF 1-50</scope>
</reference>
<reference key="4">
    <citation type="unpublished observations" date="1996-06">
        <authorList>
            <person name="Rudd K.E."/>
        </authorList>
    </citation>
    <scope>IDENTIFICATION</scope>
</reference>
<feature type="chain" id="PRO_0000087290" description="Protein FliZ">
    <location>
        <begin position="1"/>
        <end position="183"/>
    </location>
</feature>
<comment type="function">
    <text>May regulate sigma factor activity.</text>
</comment>